<keyword id="KW-0004">4Fe-4S</keyword>
<keyword id="KW-0150">Chloroplast</keyword>
<keyword id="KW-0408">Iron</keyword>
<keyword id="KW-0411">Iron-sulfur</keyword>
<keyword id="KW-0472">Membrane</keyword>
<keyword id="KW-0479">Metal-binding</keyword>
<keyword id="KW-0520">NAD</keyword>
<keyword id="KW-0521">NADP</keyword>
<keyword id="KW-0934">Plastid</keyword>
<keyword id="KW-0618">Plastoquinone</keyword>
<keyword id="KW-0874">Quinone</keyword>
<keyword id="KW-0793">Thylakoid</keyword>
<keyword id="KW-1278">Translocase</keyword>
<keyword id="KW-0813">Transport</keyword>
<sequence>MNSIKFPVLDRTTKNSVISTTLNDLSNWSRLSSLWPFLYGTSCCFIEFASLIGSRFDFDRYGLVPRSSPRQADLILTAGTVTMKMAPSLVRLYEQMPEPKYVIAMGACTITGGMFSTDSYSTVRGVDKLIPVDVYLPGCPPKPEAVIDAITKLRKKIAREIYTDRIRPQQGNRCFTTNHKFFVVRSTHTGNSDQQLLYPPPSTSEISTETFFKYKSPVSSHELVN</sequence>
<accession>A4QL23</accession>
<protein>
    <recommendedName>
        <fullName evidence="1">NAD(P)H-quinone oxidoreductase subunit K, chloroplastic</fullName>
        <ecNumber evidence="1">7.1.1.-</ecNumber>
    </recommendedName>
    <alternativeName>
        <fullName evidence="1">NAD(P)H dehydrogenase subunit K</fullName>
    </alternativeName>
    <alternativeName>
        <fullName evidence="1">NADH-plastoquinone oxidoreductase subunit K</fullName>
    </alternativeName>
</protein>
<name>NDHK_DRANE</name>
<geneLocation type="chloroplast"/>
<gene>
    <name evidence="1" type="primary">ndhK</name>
</gene>
<evidence type="ECO:0000255" key="1">
    <source>
        <dbReference type="HAMAP-Rule" id="MF_01356"/>
    </source>
</evidence>
<comment type="function">
    <text evidence="1">NDH shuttles electrons from NAD(P)H:plastoquinone, via FMN and iron-sulfur (Fe-S) centers, to quinones in the photosynthetic chain and possibly in a chloroplast respiratory chain. The immediate electron acceptor for the enzyme in this species is believed to be plastoquinone. Couples the redox reaction to proton translocation, and thus conserves the redox energy in a proton gradient.</text>
</comment>
<comment type="catalytic activity">
    <reaction evidence="1">
        <text>a plastoquinone + NADH + (n+1) H(+)(in) = a plastoquinol + NAD(+) + n H(+)(out)</text>
        <dbReference type="Rhea" id="RHEA:42608"/>
        <dbReference type="Rhea" id="RHEA-COMP:9561"/>
        <dbReference type="Rhea" id="RHEA-COMP:9562"/>
        <dbReference type="ChEBI" id="CHEBI:15378"/>
        <dbReference type="ChEBI" id="CHEBI:17757"/>
        <dbReference type="ChEBI" id="CHEBI:57540"/>
        <dbReference type="ChEBI" id="CHEBI:57945"/>
        <dbReference type="ChEBI" id="CHEBI:62192"/>
    </reaction>
</comment>
<comment type="catalytic activity">
    <reaction evidence="1">
        <text>a plastoquinone + NADPH + (n+1) H(+)(in) = a plastoquinol + NADP(+) + n H(+)(out)</text>
        <dbReference type="Rhea" id="RHEA:42612"/>
        <dbReference type="Rhea" id="RHEA-COMP:9561"/>
        <dbReference type="Rhea" id="RHEA-COMP:9562"/>
        <dbReference type="ChEBI" id="CHEBI:15378"/>
        <dbReference type="ChEBI" id="CHEBI:17757"/>
        <dbReference type="ChEBI" id="CHEBI:57783"/>
        <dbReference type="ChEBI" id="CHEBI:58349"/>
        <dbReference type="ChEBI" id="CHEBI:62192"/>
    </reaction>
</comment>
<comment type="cofactor">
    <cofactor evidence="1">
        <name>[4Fe-4S] cluster</name>
        <dbReference type="ChEBI" id="CHEBI:49883"/>
    </cofactor>
    <text evidence="1">Binds 1 [4Fe-4S] cluster.</text>
</comment>
<comment type="subunit">
    <text evidence="1">NDH is composed of at least 16 different subunits, 5 of which are encoded in the nucleus.</text>
</comment>
<comment type="subcellular location">
    <subcellularLocation>
        <location evidence="1">Plastid</location>
        <location evidence="1">Chloroplast thylakoid membrane</location>
        <topology evidence="1">Peripheral membrane protein</topology>
        <orientation evidence="1">Stromal side</orientation>
    </subcellularLocation>
</comment>
<comment type="similarity">
    <text evidence="1">Belongs to the complex I 20 kDa subunit family.</text>
</comment>
<dbReference type="EC" id="7.1.1.-" evidence="1"/>
<dbReference type="EMBL" id="AP009373">
    <property type="protein sequence ID" value="BAF50378.1"/>
    <property type="molecule type" value="Genomic_DNA"/>
</dbReference>
<dbReference type="RefSeq" id="YP_001123554.1">
    <property type="nucleotide sequence ID" value="NC_009272.1"/>
</dbReference>
<dbReference type="SMR" id="A4QL23"/>
<dbReference type="GeneID" id="4964738"/>
<dbReference type="GO" id="GO:0009535">
    <property type="term" value="C:chloroplast thylakoid membrane"/>
    <property type="evidence" value="ECO:0007669"/>
    <property type="project" value="UniProtKB-SubCell"/>
</dbReference>
<dbReference type="GO" id="GO:0045271">
    <property type="term" value="C:respiratory chain complex I"/>
    <property type="evidence" value="ECO:0007669"/>
    <property type="project" value="TreeGrafter"/>
</dbReference>
<dbReference type="GO" id="GO:0051539">
    <property type="term" value="F:4 iron, 4 sulfur cluster binding"/>
    <property type="evidence" value="ECO:0007669"/>
    <property type="project" value="UniProtKB-KW"/>
</dbReference>
<dbReference type="GO" id="GO:0005506">
    <property type="term" value="F:iron ion binding"/>
    <property type="evidence" value="ECO:0007669"/>
    <property type="project" value="UniProtKB-UniRule"/>
</dbReference>
<dbReference type="GO" id="GO:0008137">
    <property type="term" value="F:NADH dehydrogenase (ubiquinone) activity"/>
    <property type="evidence" value="ECO:0007669"/>
    <property type="project" value="InterPro"/>
</dbReference>
<dbReference type="GO" id="GO:0048038">
    <property type="term" value="F:quinone binding"/>
    <property type="evidence" value="ECO:0007669"/>
    <property type="project" value="UniProtKB-KW"/>
</dbReference>
<dbReference type="GO" id="GO:0009060">
    <property type="term" value="P:aerobic respiration"/>
    <property type="evidence" value="ECO:0007669"/>
    <property type="project" value="TreeGrafter"/>
</dbReference>
<dbReference type="GO" id="GO:0015990">
    <property type="term" value="P:electron transport coupled proton transport"/>
    <property type="evidence" value="ECO:0007669"/>
    <property type="project" value="TreeGrafter"/>
</dbReference>
<dbReference type="GO" id="GO:0019684">
    <property type="term" value="P:photosynthesis, light reaction"/>
    <property type="evidence" value="ECO:0007669"/>
    <property type="project" value="UniProtKB-UniRule"/>
</dbReference>
<dbReference type="FunFam" id="3.40.50.12280:FF:000003">
    <property type="entry name" value="NAD(P)H-quinone oxidoreductase subunit K, chloroplastic"/>
    <property type="match status" value="1"/>
</dbReference>
<dbReference type="Gene3D" id="3.40.50.12280">
    <property type="match status" value="1"/>
</dbReference>
<dbReference type="HAMAP" id="MF_01356">
    <property type="entry name" value="NDH1_NuoB"/>
    <property type="match status" value="1"/>
</dbReference>
<dbReference type="InterPro" id="IPR006137">
    <property type="entry name" value="NADH_UbQ_OxRdtase-like_20kDa"/>
</dbReference>
<dbReference type="InterPro" id="IPR006138">
    <property type="entry name" value="NADH_UQ_OxRdtase_20Kd_su"/>
</dbReference>
<dbReference type="NCBIfam" id="TIGR01957">
    <property type="entry name" value="nuoB_fam"/>
    <property type="match status" value="1"/>
</dbReference>
<dbReference type="NCBIfam" id="NF005012">
    <property type="entry name" value="PRK06411.1"/>
    <property type="match status" value="1"/>
</dbReference>
<dbReference type="PANTHER" id="PTHR11995">
    <property type="entry name" value="NADH DEHYDROGENASE"/>
    <property type="match status" value="1"/>
</dbReference>
<dbReference type="PANTHER" id="PTHR11995:SF14">
    <property type="entry name" value="NADH DEHYDROGENASE [UBIQUINONE] IRON-SULFUR PROTEIN 7, MITOCHONDRIAL"/>
    <property type="match status" value="1"/>
</dbReference>
<dbReference type="Pfam" id="PF01058">
    <property type="entry name" value="Oxidored_q6"/>
    <property type="match status" value="1"/>
</dbReference>
<dbReference type="SUPFAM" id="SSF56770">
    <property type="entry name" value="HydA/Nqo6-like"/>
    <property type="match status" value="1"/>
</dbReference>
<dbReference type="PROSITE" id="PS01150">
    <property type="entry name" value="COMPLEX1_20K"/>
    <property type="match status" value="1"/>
</dbReference>
<organism>
    <name type="scientific">Draba nemorosa</name>
    <name type="common">Woodland whitlowgrass</name>
    <dbReference type="NCBI Taxonomy" id="171822"/>
    <lineage>
        <taxon>Eukaryota</taxon>
        <taxon>Viridiplantae</taxon>
        <taxon>Streptophyta</taxon>
        <taxon>Embryophyta</taxon>
        <taxon>Tracheophyta</taxon>
        <taxon>Spermatophyta</taxon>
        <taxon>Magnoliopsida</taxon>
        <taxon>eudicotyledons</taxon>
        <taxon>Gunneridae</taxon>
        <taxon>Pentapetalae</taxon>
        <taxon>rosids</taxon>
        <taxon>malvids</taxon>
        <taxon>Brassicales</taxon>
        <taxon>Brassicaceae</taxon>
        <taxon>Arabideae</taxon>
        <taxon>Draba</taxon>
    </lineage>
</organism>
<reference key="1">
    <citation type="submission" date="2007-03" db="EMBL/GenBank/DDBJ databases">
        <title>Sequencing analysis of Draba nemoroza chloroplast DNA.</title>
        <authorList>
            <person name="Hosouchi T."/>
            <person name="Tsuruoka H."/>
            <person name="Kotani H."/>
        </authorList>
    </citation>
    <scope>NUCLEOTIDE SEQUENCE [LARGE SCALE GENOMIC DNA]</scope>
</reference>
<proteinExistence type="inferred from homology"/>
<feature type="chain" id="PRO_0000358541" description="NAD(P)H-quinone oxidoreductase subunit K, chloroplastic">
    <location>
        <begin position="1"/>
        <end position="225"/>
    </location>
</feature>
<feature type="binding site" evidence="1">
    <location>
        <position position="43"/>
    </location>
    <ligand>
        <name>[4Fe-4S] cluster</name>
        <dbReference type="ChEBI" id="CHEBI:49883"/>
    </ligand>
</feature>
<feature type="binding site" evidence="1">
    <location>
        <position position="44"/>
    </location>
    <ligand>
        <name>[4Fe-4S] cluster</name>
        <dbReference type="ChEBI" id="CHEBI:49883"/>
    </ligand>
</feature>
<feature type="binding site" evidence="1">
    <location>
        <position position="108"/>
    </location>
    <ligand>
        <name>[4Fe-4S] cluster</name>
        <dbReference type="ChEBI" id="CHEBI:49883"/>
    </ligand>
</feature>
<feature type="binding site" evidence="1">
    <location>
        <position position="139"/>
    </location>
    <ligand>
        <name>[4Fe-4S] cluster</name>
        <dbReference type="ChEBI" id="CHEBI:49883"/>
    </ligand>
</feature>